<keyword id="KW-0030">Aminoacyl-tRNA synthetase</keyword>
<keyword id="KW-0067">ATP-binding</keyword>
<keyword id="KW-0963">Cytoplasm</keyword>
<keyword id="KW-0436">Ligase</keyword>
<keyword id="KW-0460">Magnesium</keyword>
<keyword id="KW-0479">Metal-binding</keyword>
<keyword id="KW-0547">Nucleotide-binding</keyword>
<keyword id="KW-0648">Protein biosynthesis</keyword>
<reference key="1">
    <citation type="journal article" date="2008" name="PLoS ONE">
        <title>A recalibrated molecular clock and independent origins for the cholera pandemic clones.</title>
        <authorList>
            <person name="Feng L."/>
            <person name="Reeves P.R."/>
            <person name="Lan R."/>
            <person name="Ren Y."/>
            <person name="Gao C."/>
            <person name="Zhou Z."/>
            <person name="Ren Y."/>
            <person name="Cheng J."/>
            <person name="Wang W."/>
            <person name="Wang J."/>
            <person name="Qian W."/>
            <person name="Li D."/>
            <person name="Wang L."/>
        </authorList>
    </citation>
    <scope>NUCLEOTIDE SEQUENCE [LARGE SCALE GENOMIC DNA]</scope>
    <source>
        <strain>M66-2</strain>
    </source>
</reference>
<evidence type="ECO:0000255" key="1">
    <source>
        <dbReference type="HAMAP-Rule" id="MF_00281"/>
    </source>
</evidence>
<dbReference type="EC" id="6.1.1.20" evidence="1"/>
<dbReference type="EMBL" id="CP001233">
    <property type="protein sequence ID" value="ACP05491.1"/>
    <property type="molecule type" value="Genomic_DNA"/>
</dbReference>
<dbReference type="RefSeq" id="WP_001164219.1">
    <property type="nucleotide sequence ID" value="NC_012578.1"/>
</dbReference>
<dbReference type="SMR" id="C3LLR5"/>
<dbReference type="KEGG" id="vcm:VCM66_1174"/>
<dbReference type="HOGENOM" id="CLU_025086_0_1_6"/>
<dbReference type="Proteomes" id="UP000001217">
    <property type="component" value="Chromosome I"/>
</dbReference>
<dbReference type="GO" id="GO:0005737">
    <property type="term" value="C:cytoplasm"/>
    <property type="evidence" value="ECO:0007669"/>
    <property type="project" value="UniProtKB-SubCell"/>
</dbReference>
<dbReference type="GO" id="GO:0005524">
    <property type="term" value="F:ATP binding"/>
    <property type="evidence" value="ECO:0007669"/>
    <property type="project" value="UniProtKB-UniRule"/>
</dbReference>
<dbReference type="GO" id="GO:0000287">
    <property type="term" value="F:magnesium ion binding"/>
    <property type="evidence" value="ECO:0007669"/>
    <property type="project" value="UniProtKB-UniRule"/>
</dbReference>
<dbReference type="GO" id="GO:0004826">
    <property type="term" value="F:phenylalanine-tRNA ligase activity"/>
    <property type="evidence" value="ECO:0007669"/>
    <property type="project" value="UniProtKB-UniRule"/>
</dbReference>
<dbReference type="GO" id="GO:0000049">
    <property type="term" value="F:tRNA binding"/>
    <property type="evidence" value="ECO:0007669"/>
    <property type="project" value="InterPro"/>
</dbReference>
<dbReference type="GO" id="GO:0006432">
    <property type="term" value="P:phenylalanyl-tRNA aminoacylation"/>
    <property type="evidence" value="ECO:0007669"/>
    <property type="project" value="UniProtKB-UniRule"/>
</dbReference>
<dbReference type="CDD" id="cd00496">
    <property type="entry name" value="PheRS_alpha_core"/>
    <property type="match status" value="1"/>
</dbReference>
<dbReference type="FunFam" id="3.30.930.10:FF:000003">
    <property type="entry name" value="Phenylalanine--tRNA ligase alpha subunit"/>
    <property type="match status" value="1"/>
</dbReference>
<dbReference type="Gene3D" id="3.30.930.10">
    <property type="entry name" value="Bira Bifunctional Protein, Domain 2"/>
    <property type="match status" value="1"/>
</dbReference>
<dbReference type="HAMAP" id="MF_00281">
    <property type="entry name" value="Phe_tRNA_synth_alpha1"/>
    <property type="match status" value="1"/>
</dbReference>
<dbReference type="InterPro" id="IPR006195">
    <property type="entry name" value="aa-tRNA-synth_II"/>
</dbReference>
<dbReference type="InterPro" id="IPR045864">
    <property type="entry name" value="aa-tRNA-synth_II/BPL/LPL"/>
</dbReference>
<dbReference type="InterPro" id="IPR004529">
    <property type="entry name" value="Phe-tRNA-synth_IIc_asu"/>
</dbReference>
<dbReference type="InterPro" id="IPR004188">
    <property type="entry name" value="Phe-tRNA_ligase_II_N"/>
</dbReference>
<dbReference type="InterPro" id="IPR022911">
    <property type="entry name" value="Phe_tRNA_ligase_alpha1_bac"/>
</dbReference>
<dbReference type="InterPro" id="IPR002319">
    <property type="entry name" value="Phenylalanyl-tRNA_Synthase"/>
</dbReference>
<dbReference type="InterPro" id="IPR010978">
    <property type="entry name" value="tRNA-bd_arm"/>
</dbReference>
<dbReference type="NCBIfam" id="TIGR00468">
    <property type="entry name" value="pheS"/>
    <property type="match status" value="1"/>
</dbReference>
<dbReference type="PANTHER" id="PTHR11538:SF41">
    <property type="entry name" value="PHENYLALANINE--TRNA LIGASE, MITOCHONDRIAL"/>
    <property type="match status" value="1"/>
</dbReference>
<dbReference type="PANTHER" id="PTHR11538">
    <property type="entry name" value="PHENYLALANYL-TRNA SYNTHETASE"/>
    <property type="match status" value="1"/>
</dbReference>
<dbReference type="Pfam" id="PF02912">
    <property type="entry name" value="Phe_tRNA-synt_N"/>
    <property type="match status" value="1"/>
</dbReference>
<dbReference type="Pfam" id="PF01409">
    <property type="entry name" value="tRNA-synt_2d"/>
    <property type="match status" value="1"/>
</dbReference>
<dbReference type="SUPFAM" id="SSF55681">
    <property type="entry name" value="Class II aaRS and biotin synthetases"/>
    <property type="match status" value="1"/>
</dbReference>
<dbReference type="SUPFAM" id="SSF46589">
    <property type="entry name" value="tRNA-binding arm"/>
    <property type="match status" value="1"/>
</dbReference>
<dbReference type="PROSITE" id="PS50862">
    <property type="entry name" value="AA_TRNA_LIGASE_II"/>
    <property type="match status" value="1"/>
</dbReference>
<sequence length="327" mass="37050">MQHLQEIIANATSAINAAESLVALDEVRVQYLGKKGELTVQLQSLGKLPPEERRTAGQEINVAKEAVQKALAERKDALQSAELEAKLAAETIDVTLPGRRIENGGLHPVTRTIERIESFFGELGFTVESGPEIEDDFHNFDALNIAADHPARTDHDTFFFNPKLMLRTHTSGVQIRTLEERQPPLRFIAPGRVYRNDYDQTHTPMFHQVEGMLVDENVNFAQLKGILHDFLCNFFEEDLEVRFRPSYFPFTEPSAEVDVKGKNGKWLEVLGCGMVHPNVLRSVGIDPEKYSGFAFGMGVERLTMLRYGVNDLRAFFENDLRFLKQFK</sequence>
<name>SYFA_VIBCM</name>
<comment type="catalytic activity">
    <reaction evidence="1">
        <text>tRNA(Phe) + L-phenylalanine + ATP = L-phenylalanyl-tRNA(Phe) + AMP + diphosphate + H(+)</text>
        <dbReference type="Rhea" id="RHEA:19413"/>
        <dbReference type="Rhea" id="RHEA-COMP:9668"/>
        <dbReference type="Rhea" id="RHEA-COMP:9699"/>
        <dbReference type="ChEBI" id="CHEBI:15378"/>
        <dbReference type="ChEBI" id="CHEBI:30616"/>
        <dbReference type="ChEBI" id="CHEBI:33019"/>
        <dbReference type="ChEBI" id="CHEBI:58095"/>
        <dbReference type="ChEBI" id="CHEBI:78442"/>
        <dbReference type="ChEBI" id="CHEBI:78531"/>
        <dbReference type="ChEBI" id="CHEBI:456215"/>
        <dbReference type="EC" id="6.1.1.20"/>
    </reaction>
</comment>
<comment type="cofactor">
    <cofactor evidence="1">
        <name>Mg(2+)</name>
        <dbReference type="ChEBI" id="CHEBI:18420"/>
    </cofactor>
    <text evidence="1">Binds 2 magnesium ions per tetramer.</text>
</comment>
<comment type="subunit">
    <text evidence="1">Tetramer of two alpha and two beta subunits.</text>
</comment>
<comment type="subcellular location">
    <subcellularLocation>
        <location evidence="1">Cytoplasm</location>
    </subcellularLocation>
</comment>
<comment type="similarity">
    <text evidence="1">Belongs to the class-II aminoacyl-tRNA synthetase family. Phe-tRNA synthetase alpha subunit type 1 subfamily.</text>
</comment>
<proteinExistence type="inferred from homology"/>
<organism>
    <name type="scientific">Vibrio cholerae serotype O1 (strain M66-2)</name>
    <dbReference type="NCBI Taxonomy" id="579112"/>
    <lineage>
        <taxon>Bacteria</taxon>
        <taxon>Pseudomonadati</taxon>
        <taxon>Pseudomonadota</taxon>
        <taxon>Gammaproteobacteria</taxon>
        <taxon>Vibrionales</taxon>
        <taxon>Vibrionaceae</taxon>
        <taxon>Vibrio</taxon>
    </lineage>
</organism>
<protein>
    <recommendedName>
        <fullName evidence="1">Phenylalanine--tRNA ligase alpha subunit</fullName>
        <ecNumber evidence="1">6.1.1.20</ecNumber>
    </recommendedName>
    <alternativeName>
        <fullName evidence="1">Phenylalanyl-tRNA synthetase alpha subunit</fullName>
        <shortName evidence="1">PheRS</shortName>
    </alternativeName>
</protein>
<gene>
    <name evidence="1" type="primary">pheS</name>
    <name type="ordered locus">VCM66_1174</name>
</gene>
<feature type="chain" id="PRO_1000199332" description="Phenylalanine--tRNA ligase alpha subunit">
    <location>
        <begin position="1"/>
        <end position="327"/>
    </location>
</feature>
<feature type="binding site" evidence="1">
    <location>
        <position position="252"/>
    </location>
    <ligand>
        <name>Mg(2+)</name>
        <dbReference type="ChEBI" id="CHEBI:18420"/>
        <note>shared with beta subunit</note>
    </ligand>
</feature>
<accession>C3LLR5</accession>